<reference key="1">
    <citation type="journal article" date="2008" name="Appl. Environ. Microbiol.">
        <title>Genome of the epsilonproteobacterial chemolithoautotroph Sulfurimonas denitrificans.</title>
        <authorList>
            <person name="Sievert S.M."/>
            <person name="Scott K.M."/>
            <person name="Klotz M.G."/>
            <person name="Chain P.S.G."/>
            <person name="Hauser L.J."/>
            <person name="Hemp J."/>
            <person name="Huegler M."/>
            <person name="Land M."/>
            <person name="Lapidus A."/>
            <person name="Larimer F.W."/>
            <person name="Lucas S."/>
            <person name="Malfatti S.A."/>
            <person name="Meyer F."/>
            <person name="Paulsen I.T."/>
            <person name="Ren Q."/>
            <person name="Simon J."/>
            <person name="Bailey K."/>
            <person name="Diaz E."/>
            <person name="Fitzpatrick K.A."/>
            <person name="Glover B."/>
            <person name="Gwatney N."/>
            <person name="Korajkic A."/>
            <person name="Long A."/>
            <person name="Mobberley J.M."/>
            <person name="Pantry S.N."/>
            <person name="Pazder G."/>
            <person name="Peterson S."/>
            <person name="Quintanilla J.D."/>
            <person name="Sprinkle R."/>
            <person name="Stephens J."/>
            <person name="Thomas P."/>
            <person name="Vaughn R."/>
            <person name="Weber M.J."/>
            <person name="Wooten L.L."/>
        </authorList>
    </citation>
    <scope>NUCLEOTIDE SEQUENCE [LARGE SCALE GENOMIC DNA]</scope>
    <source>
        <strain>ATCC 33889 / DSM 1251</strain>
    </source>
</reference>
<accession>Q30PI9</accession>
<name>NUOK_SULDN</name>
<comment type="function">
    <text evidence="1">NDH-1 shuttles electrons from NADH, via FMN and iron-sulfur (Fe-S) centers, to quinones in the respiratory chain. The immediate electron acceptor for the enzyme in this species is believed to be ubiquinone. Couples the redox reaction to proton translocation (for every two electrons transferred, four hydrogen ions are translocated across the cytoplasmic membrane), and thus conserves the redox energy in a proton gradient.</text>
</comment>
<comment type="catalytic activity">
    <reaction evidence="1">
        <text>a quinone + NADH + 5 H(+)(in) = a quinol + NAD(+) + 4 H(+)(out)</text>
        <dbReference type="Rhea" id="RHEA:57888"/>
        <dbReference type="ChEBI" id="CHEBI:15378"/>
        <dbReference type="ChEBI" id="CHEBI:24646"/>
        <dbReference type="ChEBI" id="CHEBI:57540"/>
        <dbReference type="ChEBI" id="CHEBI:57945"/>
        <dbReference type="ChEBI" id="CHEBI:132124"/>
    </reaction>
</comment>
<comment type="subunit">
    <text evidence="1">NDH-1 is composed of 14 different subunits. Subunits NuoA, H, J, K, L, M, N constitute the membrane sector of the complex.</text>
</comment>
<comment type="subcellular location">
    <subcellularLocation>
        <location evidence="1">Cell inner membrane</location>
        <topology evidence="1">Multi-pass membrane protein</topology>
    </subcellularLocation>
</comment>
<comment type="similarity">
    <text evidence="1">Belongs to the complex I subunit 4L family.</text>
</comment>
<dbReference type="EC" id="7.1.1.-" evidence="1"/>
<dbReference type="EMBL" id="CP000153">
    <property type="protein sequence ID" value="ABB45092.1"/>
    <property type="molecule type" value="Genomic_DNA"/>
</dbReference>
<dbReference type="RefSeq" id="WP_011373432.1">
    <property type="nucleotide sequence ID" value="NC_007575.1"/>
</dbReference>
<dbReference type="SMR" id="Q30PI9"/>
<dbReference type="STRING" id="326298.Suden_1818"/>
<dbReference type="KEGG" id="tdn:Suden_1818"/>
<dbReference type="eggNOG" id="COG0713">
    <property type="taxonomic scope" value="Bacteria"/>
</dbReference>
<dbReference type="HOGENOM" id="CLU_144724_0_0_7"/>
<dbReference type="OrthoDB" id="9810120at2"/>
<dbReference type="Proteomes" id="UP000002714">
    <property type="component" value="Chromosome"/>
</dbReference>
<dbReference type="GO" id="GO:0030964">
    <property type="term" value="C:NADH dehydrogenase complex"/>
    <property type="evidence" value="ECO:0007669"/>
    <property type="project" value="TreeGrafter"/>
</dbReference>
<dbReference type="GO" id="GO:0005886">
    <property type="term" value="C:plasma membrane"/>
    <property type="evidence" value="ECO:0007669"/>
    <property type="project" value="UniProtKB-SubCell"/>
</dbReference>
<dbReference type="GO" id="GO:0050136">
    <property type="term" value="F:NADH:ubiquinone reductase (non-electrogenic) activity"/>
    <property type="evidence" value="ECO:0007669"/>
    <property type="project" value="UniProtKB-UniRule"/>
</dbReference>
<dbReference type="GO" id="GO:0048038">
    <property type="term" value="F:quinone binding"/>
    <property type="evidence" value="ECO:0007669"/>
    <property type="project" value="UniProtKB-KW"/>
</dbReference>
<dbReference type="GO" id="GO:0042773">
    <property type="term" value="P:ATP synthesis coupled electron transport"/>
    <property type="evidence" value="ECO:0007669"/>
    <property type="project" value="InterPro"/>
</dbReference>
<dbReference type="FunFam" id="1.10.287.3510:FF:000001">
    <property type="entry name" value="NADH-quinone oxidoreductase subunit K"/>
    <property type="match status" value="1"/>
</dbReference>
<dbReference type="Gene3D" id="1.10.287.3510">
    <property type="match status" value="1"/>
</dbReference>
<dbReference type="HAMAP" id="MF_01456">
    <property type="entry name" value="NDH1_NuoK"/>
    <property type="match status" value="1"/>
</dbReference>
<dbReference type="InterPro" id="IPR001133">
    <property type="entry name" value="NADH_UbQ_OxRdtase_chain4L/K"/>
</dbReference>
<dbReference type="InterPro" id="IPR039428">
    <property type="entry name" value="NUOK/Mnh_C1-like"/>
</dbReference>
<dbReference type="NCBIfam" id="NF004320">
    <property type="entry name" value="PRK05715.1-2"/>
    <property type="match status" value="1"/>
</dbReference>
<dbReference type="NCBIfam" id="NF004321">
    <property type="entry name" value="PRK05715.1-3"/>
    <property type="match status" value="1"/>
</dbReference>
<dbReference type="NCBIfam" id="NF004323">
    <property type="entry name" value="PRK05715.1-5"/>
    <property type="match status" value="1"/>
</dbReference>
<dbReference type="PANTHER" id="PTHR11434:SF21">
    <property type="entry name" value="NADH DEHYDROGENASE SUBUNIT 4L-RELATED"/>
    <property type="match status" value="1"/>
</dbReference>
<dbReference type="PANTHER" id="PTHR11434">
    <property type="entry name" value="NADH-UBIQUINONE OXIDOREDUCTASE SUBUNIT ND4L"/>
    <property type="match status" value="1"/>
</dbReference>
<dbReference type="Pfam" id="PF00420">
    <property type="entry name" value="Oxidored_q2"/>
    <property type="match status" value="1"/>
</dbReference>
<feature type="chain" id="PRO_0000390256" description="NADH-quinone oxidoreductase subunit K">
    <location>
        <begin position="1"/>
        <end position="102"/>
    </location>
</feature>
<feature type="transmembrane region" description="Helical" evidence="1">
    <location>
        <begin position="4"/>
        <end position="24"/>
    </location>
</feature>
<feature type="transmembrane region" description="Helical" evidence="1">
    <location>
        <begin position="31"/>
        <end position="51"/>
    </location>
</feature>
<feature type="transmembrane region" description="Helical" evidence="1">
    <location>
        <begin position="65"/>
        <end position="85"/>
    </location>
</feature>
<gene>
    <name evidence="1" type="primary">nuoK</name>
    <name type="ordered locus">Suden_1818</name>
</gene>
<evidence type="ECO:0000255" key="1">
    <source>
        <dbReference type="HAMAP-Rule" id="MF_01456"/>
    </source>
</evidence>
<proteinExistence type="inferred from homology"/>
<protein>
    <recommendedName>
        <fullName evidence="1">NADH-quinone oxidoreductase subunit K</fullName>
        <ecNumber evidence="1">7.1.1.-</ecNumber>
    </recommendedName>
    <alternativeName>
        <fullName evidence="1">NADH dehydrogenase I subunit K</fullName>
    </alternativeName>
    <alternativeName>
        <fullName evidence="1">NDH-1 subunit K</fullName>
    </alternativeName>
</protein>
<organism>
    <name type="scientific">Sulfurimonas denitrificans (strain ATCC 33889 / DSM 1251)</name>
    <name type="common">Thiomicrospira denitrificans (strain ATCC 33889 / DSM 1251)</name>
    <dbReference type="NCBI Taxonomy" id="326298"/>
    <lineage>
        <taxon>Bacteria</taxon>
        <taxon>Pseudomonadati</taxon>
        <taxon>Campylobacterota</taxon>
        <taxon>Epsilonproteobacteria</taxon>
        <taxon>Campylobacterales</taxon>
        <taxon>Sulfurimonadaceae</taxon>
        <taxon>Sulfurimonas</taxon>
    </lineage>
</organism>
<sequence length="102" mass="11349">MMEIGLNHYLVLSTILFAIGLVGVMRRKNLLMLFFATEILLNSVNISFAAISHYYGDLTGQMFAFFVIAIAASEVAVGLGLLIVWHKKHNNIDLDNMSTMRG</sequence>
<keyword id="KW-0997">Cell inner membrane</keyword>
<keyword id="KW-1003">Cell membrane</keyword>
<keyword id="KW-0472">Membrane</keyword>
<keyword id="KW-0520">NAD</keyword>
<keyword id="KW-0874">Quinone</keyword>
<keyword id="KW-1185">Reference proteome</keyword>
<keyword id="KW-1278">Translocase</keyword>
<keyword id="KW-0812">Transmembrane</keyword>
<keyword id="KW-1133">Transmembrane helix</keyword>
<keyword id="KW-0813">Transport</keyword>
<keyword id="KW-0830">Ubiquinone</keyword>